<comment type="function">
    <text evidence="1">Catalyzes the dephosphorylation of undecaprenyl diphosphate (UPP). Confers resistance to bacitracin.</text>
</comment>
<comment type="catalytic activity">
    <reaction evidence="1">
        <text>di-trans,octa-cis-undecaprenyl diphosphate + H2O = di-trans,octa-cis-undecaprenyl phosphate + phosphate + H(+)</text>
        <dbReference type="Rhea" id="RHEA:28094"/>
        <dbReference type="ChEBI" id="CHEBI:15377"/>
        <dbReference type="ChEBI" id="CHEBI:15378"/>
        <dbReference type="ChEBI" id="CHEBI:43474"/>
        <dbReference type="ChEBI" id="CHEBI:58405"/>
        <dbReference type="ChEBI" id="CHEBI:60392"/>
        <dbReference type="EC" id="3.6.1.27"/>
    </reaction>
</comment>
<comment type="subcellular location">
    <subcellularLocation>
        <location evidence="1">Cell membrane</location>
        <topology evidence="1">Multi-pass membrane protein</topology>
    </subcellularLocation>
</comment>
<comment type="miscellaneous">
    <text>Bacitracin is thought to be involved in the inhibition of peptidoglycan synthesis by sequestering undecaprenyl diphosphate, thereby reducing the pool of lipid carrier available.</text>
</comment>
<comment type="similarity">
    <text evidence="1">Belongs to the UppP family.</text>
</comment>
<gene>
    <name evidence="1" type="primary">uppP2</name>
    <name type="ordered locus">Francci3_2797</name>
</gene>
<protein>
    <recommendedName>
        <fullName evidence="1">Undecaprenyl-diphosphatase 2</fullName>
        <ecNumber evidence="1">3.6.1.27</ecNumber>
    </recommendedName>
    <alternativeName>
        <fullName evidence="1">Bacitracin resistance protein 2</fullName>
    </alternativeName>
    <alternativeName>
        <fullName evidence="1">Undecaprenyl pyrophosphate phosphatase 2</fullName>
    </alternativeName>
</protein>
<proteinExistence type="inferred from homology"/>
<sequence>MNFFEGTVLGLVQGLTEFLPVSSSAHLRIAAALAGWEDPGAAFTAVTQIGTETAVLIYFRRDIARIVAAWARSLTRREMRKDPDARTGWLVILGTLPIGLLGVTLQDAIEGPFRDLRLIATTLIVLGLILGGADWYASKGRPQGRHSPLRPRKVLEDLSVRDGLLYGLAQSAALIPGVSRSGATISGGLLLGYTREAAARYSFLLAMPAVLASGVFELRSIGGKDADVAWGPTILATFVAFVTGYAAIAWFLRYISTRSFAPFVLYRVGLGLLLFSLLVGGALSPDAGAPPG</sequence>
<accession>Q2J987</accession>
<dbReference type="EC" id="3.6.1.27" evidence="1"/>
<dbReference type="EMBL" id="CP000249">
    <property type="protein sequence ID" value="ABD12155.1"/>
    <property type="molecule type" value="Genomic_DNA"/>
</dbReference>
<dbReference type="RefSeq" id="WP_011437185.1">
    <property type="nucleotide sequence ID" value="NZ_LRTJ01000014.1"/>
</dbReference>
<dbReference type="SMR" id="Q2J987"/>
<dbReference type="STRING" id="106370.Francci3_2797"/>
<dbReference type="KEGG" id="fra:Francci3_2797"/>
<dbReference type="eggNOG" id="COG1968">
    <property type="taxonomic scope" value="Bacteria"/>
</dbReference>
<dbReference type="HOGENOM" id="CLU_060296_1_0_11"/>
<dbReference type="OrthoDB" id="9808289at2"/>
<dbReference type="PhylomeDB" id="Q2J987"/>
<dbReference type="Proteomes" id="UP000001937">
    <property type="component" value="Chromosome"/>
</dbReference>
<dbReference type="GO" id="GO:0005886">
    <property type="term" value="C:plasma membrane"/>
    <property type="evidence" value="ECO:0007669"/>
    <property type="project" value="UniProtKB-SubCell"/>
</dbReference>
<dbReference type="GO" id="GO:0050380">
    <property type="term" value="F:undecaprenyl-diphosphatase activity"/>
    <property type="evidence" value="ECO:0007669"/>
    <property type="project" value="UniProtKB-UniRule"/>
</dbReference>
<dbReference type="GO" id="GO:0071555">
    <property type="term" value="P:cell wall organization"/>
    <property type="evidence" value="ECO:0007669"/>
    <property type="project" value="UniProtKB-KW"/>
</dbReference>
<dbReference type="GO" id="GO:0009252">
    <property type="term" value="P:peptidoglycan biosynthetic process"/>
    <property type="evidence" value="ECO:0007669"/>
    <property type="project" value="UniProtKB-KW"/>
</dbReference>
<dbReference type="GO" id="GO:0008360">
    <property type="term" value="P:regulation of cell shape"/>
    <property type="evidence" value="ECO:0007669"/>
    <property type="project" value="UniProtKB-KW"/>
</dbReference>
<dbReference type="GO" id="GO:0046677">
    <property type="term" value="P:response to antibiotic"/>
    <property type="evidence" value="ECO:0007669"/>
    <property type="project" value="UniProtKB-UniRule"/>
</dbReference>
<dbReference type="HAMAP" id="MF_01006">
    <property type="entry name" value="Undec_diphosphatase"/>
    <property type="match status" value="1"/>
</dbReference>
<dbReference type="InterPro" id="IPR003824">
    <property type="entry name" value="UppP"/>
</dbReference>
<dbReference type="NCBIfam" id="NF001392">
    <property type="entry name" value="PRK00281.2-1"/>
    <property type="match status" value="1"/>
</dbReference>
<dbReference type="NCBIfam" id="TIGR00753">
    <property type="entry name" value="undec_PP_bacA"/>
    <property type="match status" value="1"/>
</dbReference>
<dbReference type="PANTHER" id="PTHR30622">
    <property type="entry name" value="UNDECAPRENYL-DIPHOSPHATASE"/>
    <property type="match status" value="1"/>
</dbReference>
<dbReference type="PANTHER" id="PTHR30622:SF4">
    <property type="entry name" value="UNDECAPRENYL-DIPHOSPHATASE"/>
    <property type="match status" value="1"/>
</dbReference>
<dbReference type="Pfam" id="PF02673">
    <property type="entry name" value="BacA"/>
    <property type="match status" value="1"/>
</dbReference>
<organism>
    <name type="scientific">Frankia casuarinae (strain DSM 45818 / CECT 9043 / HFP020203 / CcI3)</name>
    <dbReference type="NCBI Taxonomy" id="106370"/>
    <lineage>
        <taxon>Bacteria</taxon>
        <taxon>Bacillati</taxon>
        <taxon>Actinomycetota</taxon>
        <taxon>Actinomycetes</taxon>
        <taxon>Frankiales</taxon>
        <taxon>Frankiaceae</taxon>
        <taxon>Frankia</taxon>
    </lineage>
</organism>
<evidence type="ECO:0000255" key="1">
    <source>
        <dbReference type="HAMAP-Rule" id="MF_01006"/>
    </source>
</evidence>
<keyword id="KW-0046">Antibiotic resistance</keyword>
<keyword id="KW-1003">Cell membrane</keyword>
<keyword id="KW-0133">Cell shape</keyword>
<keyword id="KW-0961">Cell wall biogenesis/degradation</keyword>
<keyword id="KW-0378">Hydrolase</keyword>
<keyword id="KW-0472">Membrane</keyword>
<keyword id="KW-0573">Peptidoglycan synthesis</keyword>
<keyword id="KW-1185">Reference proteome</keyword>
<keyword id="KW-0812">Transmembrane</keyword>
<keyword id="KW-1133">Transmembrane helix</keyword>
<feature type="chain" id="PRO_0000250236" description="Undecaprenyl-diphosphatase 2">
    <location>
        <begin position="1"/>
        <end position="292"/>
    </location>
</feature>
<feature type="transmembrane region" description="Helical" evidence="1">
    <location>
        <begin position="89"/>
        <end position="109"/>
    </location>
</feature>
<feature type="transmembrane region" description="Helical" evidence="1">
    <location>
        <begin position="118"/>
        <end position="138"/>
    </location>
</feature>
<feature type="transmembrane region" description="Helical" evidence="1">
    <location>
        <begin position="203"/>
        <end position="223"/>
    </location>
</feature>
<feature type="transmembrane region" description="Helical" evidence="1">
    <location>
        <begin position="232"/>
        <end position="252"/>
    </location>
</feature>
<feature type="transmembrane region" description="Helical" evidence="1">
    <location>
        <begin position="263"/>
        <end position="283"/>
    </location>
</feature>
<reference key="1">
    <citation type="journal article" date="2007" name="Genome Res.">
        <title>Genome characteristics of facultatively symbiotic Frankia sp. strains reflect host range and host plant biogeography.</title>
        <authorList>
            <person name="Normand P."/>
            <person name="Lapierre P."/>
            <person name="Tisa L.S."/>
            <person name="Gogarten J.P."/>
            <person name="Alloisio N."/>
            <person name="Bagnarol E."/>
            <person name="Bassi C.A."/>
            <person name="Berry A.M."/>
            <person name="Bickhart D.M."/>
            <person name="Choisne N."/>
            <person name="Couloux A."/>
            <person name="Cournoyer B."/>
            <person name="Cruveiller S."/>
            <person name="Daubin V."/>
            <person name="Demange N."/>
            <person name="Francino M.P."/>
            <person name="Goltsman E."/>
            <person name="Huang Y."/>
            <person name="Kopp O.R."/>
            <person name="Labarre L."/>
            <person name="Lapidus A."/>
            <person name="Lavire C."/>
            <person name="Marechal J."/>
            <person name="Martinez M."/>
            <person name="Mastronunzio J.E."/>
            <person name="Mullin B.C."/>
            <person name="Niemann J."/>
            <person name="Pujic P."/>
            <person name="Rawnsley T."/>
            <person name="Rouy Z."/>
            <person name="Schenowitz C."/>
            <person name="Sellstedt A."/>
            <person name="Tavares F."/>
            <person name="Tomkins J.P."/>
            <person name="Vallenet D."/>
            <person name="Valverde C."/>
            <person name="Wall L.G."/>
            <person name="Wang Y."/>
            <person name="Medigue C."/>
            <person name="Benson D.R."/>
        </authorList>
    </citation>
    <scope>NUCLEOTIDE SEQUENCE [LARGE SCALE GENOMIC DNA]</scope>
    <source>
        <strain>DSM 45818 / CECT 9043 / HFP020203 / CcI3</strain>
    </source>
</reference>
<name>UPPP2_FRACC</name>